<accession>Q54TF6</accession>
<sequence length="117" mass="13582">MLFFSFYKSLVGKEITVELKNDLSITGLLQSVDQFLNIKLKDIKVNEEDKYPYMISVKNCFIRGSVVRYVHLPAEDVDVETLQDHSRLEAREQKKQNKQHQEQTNQKSSNTTTTTTV</sequence>
<protein>
    <recommendedName>
        <fullName>Probable U6 snRNA-associated Sm-like protein LSm2</fullName>
    </recommendedName>
</protein>
<dbReference type="EMBL" id="AAFI02000042">
    <property type="protein sequence ID" value="EAL66651.1"/>
    <property type="molecule type" value="Genomic_DNA"/>
</dbReference>
<dbReference type="RefSeq" id="XP_640635.1">
    <property type="nucleotide sequence ID" value="XM_635543.1"/>
</dbReference>
<dbReference type="SMR" id="Q54TF6"/>
<dbReference type="FunCoup" id="Q54TF6">
    <property type="interactions" value="863"/>
</dbReference>
<dbReference type="STRING" id="44689.Q54TF6"/>
<dbReference type="PaxDb" id="44689-DDB0233376"/>
<dbReference type="EnsemblProtists" id="EAL66651">
    <property type="protein sequence ID" value="EAL66651"/>
    <property type="gene ID" value="DDB_G0281779"/>
</dbReference>
<dbReference type="GeneID" id="8623246"/>
<dbReference type="KEGG" id="ddi:DDB_G0281779"/>
<dbReference type="dictyBase" id="DDB_G0281779">
    <property type="gene designation" value="lsm2"/>
</dbReference>
<dbReference type="VEuPathDB" id="AmoebaDB:DDB_G0281779"/>
<dbReference type="eggNOG" id="KOG3448">
    <property type="taxonomic scope" value="Eukaryota"/>
</dbReference>
<dbReference type="HOGENOM" id="CLU_130474_3_0_1"/>
<dbReference type="InParanoid" id="Q54TF6"/>
<dbReference type="OMA" id="DNISCTD"/>
<dbReference type="PhylomeDB" id="Q54TF6"/>
<dbReference type="Reactome" id="R-DDI-430039">
    <property type="pathway name" value="mRNA decay by 5' to 3' exoribonuclease"/>
</dbReference>
<dbReference type="PRO" id="PR:Q54TF6"/>
<dbReference type="Proteomes" id="UP000002195">
    <property type="component" value="Chromosome 3"/>
</dbReference>
<dbReference type="GO" id="GO:0071013">
    <property type="term" value="C:catalytic step 2 spliceosome"/>
    <property type="evidence" value="ECO:0000318"/>
    <property type="project" value="GO_Central"/>
</dbReference>
<dbReference type="GO" id="GO:1990726">
    <property type="term" value="C:Lsm1-7-Pat1 complex"/>
    <property type="evidence" value="ECO:0000318"/>
    <property type="project" value="GO_Central"/>
</dbReference>
<dbReference type="GO" id="GO:0005730">
    <property type="term" value="C:nucleolus"/>
    <property type="evidence" value="ECO:0000250"/>
    <property type="project" value="dictyBase"/>
</dbReference>
<dbReference type="GO" id="GO:0000932">
    <property type="term" value="C:P-body"/>
    <property type="evidence" value="ECO:0000318"/>
    <property type="project" value="GO_Central"/>
</dbReference>
<dbReference type="GO" id="GO:0071011">
    <property type="term" value="C:precatalytic spliceosome"/>
    <property type="evidence" value="ECO:0000318"/>
    <property type="project" value="GO_Central"/>
</dbReference>
<dbReference type="GO" id="GO:0046540">
    <property type="term" value="C:U4/U6 x U5 tri-snRNP complex"/>
    <property type="evidence" value="ECO:0000250"/>
    <property type="project" value="dictyBase"/>
</dbReference>
<dbReference type="GO" id="GO:0005688">
    <property type="term" value="C:U6 snRNP"/>
    <property type="evidence" value="ECO:0000250"/>
    <property type="project" value="dictyBase"/>
</dbReference>
<dbReference type="GO" id="GO:0003723">
    <property type="term" value="F:RNA binding"/>
    <property type="evidence" value="ECO:0007669"/>
    <property type="project" value="UniProtKB-KW"/>
</dbReference>
<dbReference type="GO" id="GO:0000398">
    <property type="term" value="P:mRNA splicing, via spliceosome"/>
    <property type="evidence" value="ECO:0000250"/>
    <property type="project" value="dictyBase"/>
</dbReference>
<dbReference type="CDD" id="cd01725">
    <property type="entry name" value="LSm2"/>
    <property type="match status" value="1"/>
</dbReference>
<dbReference type="FunFam" id="2.30.30.100:FF:000134">
    <property type="entry name" value="Probable U6 snRNA-associated Sm-like protein LSm2"/>
    <property type="match status" value="1"/>
</dbReference>
<dbReference type="Gene3D" id="2.30.30.100">
    <property type="match status" value="1"/>
</dbReference>
<dbReference type="InterPro" id="IPR010920">
    <property type="entry name" value="LSM_dom_sf"/>
</dbReference>
<dbReference type="InterPro" id="IPR047575">
    <property type="entry name" value="Sm"/>
</dbReference>
<dbReference type="InterPro" id="IPR001163">
    <property type="entry name" value="Sm_dom_euk/arc"/>
</dbReference>
<dbReference type="InterPro" id="IPR016654">
    <property type="entry name" value="U6_snRNA_Lsm2"/>
</dbReference>
<dbReference type="PANTHER" id="PTHR13829">
    <property type="entry name" value="SNRNP CORE PROTEIN FAMILY MEMBER"/>
    <property type="match status" value="1"/>
</dbReference>
<dbReference type="PANTHER" id="PTHR13829:SF2">
    <property type="entry name" value="U6 SNRNA-ASSOCIATED SM-LIKE PROTEIN LSM2"/>
    <property type="match status" value="1"/>
</dbReference>
<dbReference type="Pfam" id="PF01423">
    <property type="entry name" value="LSM"/>
    <property type="match status" value="1"/>
</dbReference>
<dbReference type="PIRSF" id="PIRSF016394">
    <property type="entry name" value="U6_snRNA_Lsm2"/>
    <property type="match status" value="1"/>
</dbReference>
<dbReference type="SMART" id="SM00651">
    <property type="entry name" value="Sm"/>
    <property type="match status" value="1"/>
</dbReference>
<dbReference type="SUPFAM" id="SSF50182">
    <property type="entry name" value="Sm-like ribonucleoproteins"/>
    <property type="match status" value="1"/>
</dbReference>
<dbReference type="PROSITE" id="PS52002">
    <property type="entry name" value="SM"/>
    <property type="match status" value="1"/>
</dbReference>
<feature type="chain" id="PRO_0000328006" description="Probable U6 snRNA-associated Sm-like protein LSm2">
    <location>
        <begin position="1"/>
        <end position="117"/>
    </location>
</feature>
<feature type="domain" description="Sm" evidence="2">
    <location>
        <begin position="2"/>
        <end position="76"/>
    </location>
</feature>
<feature type="region of interest" description="Disordered" evidence="3">
    <location>
        <begin position="83"/>
        <end position="117"/>
    </location>
</feature>
<feature type="compositionally biased region" description="Basic and acidic residues" evidence="3">
    <location>
        <begin position="83"/>
        <end position="101"/>
    </location>
</feature>
<feature type="compositionally biased region" description="Low complexity" evidence="3">
    <location>
        <begin position="102"/>
        <end position="117"/>
    </location>
</feature>
<keyword id="KW-0507">mRNA processing</keyword>
<keyword id="KW-0508">mRNA splicing</keyword>
<keyword id="KW-0539">Nucleus</keyword>
<keyword id="KW-1185">Reference proteome</keyword>
<keyword id="KW-0687">Ribonucleoprotein</keyword>
<keyword id="KW-0694">RNA-binding</keyword>
<keyword id="KW-0747">Spliceosome</keyword>
<comment type="function">
    <text evidence="1">Plays a role in pre-mRNA splicing as component of the U4/U6-U5 tri-snRNP complex that is involved in spliceosome assembly, and as component of the precatalytic spliceosome (spliceosome B complex). The heptameric LSM2-8 complex binds specifically to the 3'-terminal U-tract of U6 snRNA.</text>
</comment>
<comment type="subunit">
    <text evidence="1">Component of the precatalytic spliceosome (spliceosome B complex). Component of the U4/U6-U5 tri-snRNP complex, a building block of the precatalytic spliceosome (spliceosome B complex). LSM2, LSM3, LSM4, LSM5, LSM6, LSM7 and LSM8 form a heptameric, ring-shaped subcomplex (the LSM2-8 complex) that is part of the U4/U6-U5 tri-snRNP complex and the precatalytic spliceosome.</text>
</comment>
<comment type="subcellular location">
    <subcellularLocation>
        <location evidence="1">Nucleus</location>
    </subcellularLocation>
</comment>
<comment type="similarity">
    <text evidence="4">Belongs to the snRNP Sm proteins family.</text>
</comment>
<proteinExistence type="inferred from homology"/>
<gene>
    <name type="primary">lsm2</name>
    <name type="ORF">DDB_G0281779</name>
</gene>
<name>LSM2_DICDI</name>
<evidence type="ECO:0000250" key="1">
    <source>
        <dbReference type="UniProtKB" id="Q9Y333"/>
    </source>
</evidence>
<evidence type="ECO:0000255" key="2">
    <source>
        <dbReference type="PROSITE-ProRule" id="PRU01346"/>
    </source>
</evidence>
<evidence type="ECO:0000256" key="3">
    <source>
        <dbReference type="SAM" id="MobiDB-lite"/>
    </source>
</evidence>
<evidence type="ECO:0000305" key="4"/>
<organism>
    <name type="scientific">Dictyostelium discoideum</name>
    <name type="common">Social amoeba</name>
    <dbReference type="NCBI Taxonomy" id="44689"/>
    <lineage>
        <taxon>Eukaryota</taxon>
        <taxon>Amoebozoa</taxon>
        <taxon>Evosea</taxon>
        <taxon>Eumycetozoa</taxon>
        <taxon>Dictyostelia</taxon>
        <taxon>Dictyosteliales</taxon>
        <taxon>Dictyosteliaceae</taxon>
        <taxon>Dictyostelium</taxon>
    </lineage>
</organism>
<reference key="1">
    <citation type="journal article" date="2005" name="Nature">
        <title>The genome of the social amoeba Dictyostelium discoideum.</title>
        <authorList>
            <person name="Eichinger L."/>
            <person name="Pachebat J.A."/>
            <person name="Gloeckner G."/>
            <person name="Rajandream M.A."/>
            <person name="Sucgang R."/>
            <person name="Berriman M."/>
            <person name="Song J."/>
            <person name="Olsen R."/>
            <person name="Szafranski K."/>
            <person name="Xu Q."/>
            <person name="Tunggal B."/>
            <person name="Kummerfeld S."/>
            <person name="Madera M."/>
            <person name="Konfortov B.A."/>
            <person name="Rivero F."/>
            <person name="Bankier A.T."/>
            <person name="Lehmann R."/>
            <person name="Hamlin N."/>
            <person name="Davies R."/>
            <person name="Gaudet P."/>
            <person name="Fey P."/>
            <person name="Pilcher K."/>
            <person name="Chen G."/>
            <person name="Saunders D."/>
            <person name="Sodergren E.J."/>
            <person name="Davis P."/>
            <person name="Kerhornou A."/>
            <person name="Nie X."/>
            <person name="Hall N."/>
            <person name="Anjard C."/>
            <person name="Hemphill L."/>
            <person name="Bason N."/>
            <person name="Farbrother P."/>
            <person name="Desany B."/>
            <person name="Just E."/>
            <person name="Morio T."/>
            <person name="Rost R."/>
            <person name="Churcher C.M."/>
            <person name="Cooper J."/>
            <person name="Haydock S."/>
            <person name="van Driessche N."/>
            <person name="Cronin A."/>
            <person name="Goodhead I."/>
            <person name="Muzny D.M."/>
            <person name="Mourier T."/>
            <person name="Pain A."/>
            <person name="Lu M."/>
            <person name="Harper D."/>
            <person name="Lindsay R."/>
            <person name="Hauser H."/>
            <person name="James K.D."/>
            <person name="Quiles M."/>
            <person name="Madan Babu M."/>
            <person name="Saito T."/>
            <person name="Buchrieser C."/>
            <person name="Wardroper A."/>
            <person name="Felder M."/>
            <person name="Thangavelu M."/>
            <person name="Johnson D."/>
            <person name="Knights A."/>
            <person name="Loulseged H."/>
            <person name="Mungall K.L."/>
            <person name="Oliver K."/>
            <person name="Price C."/>
            <person name="Quail M.A."/>
            <person name="Urushihara H."/>
            <person name="Hernandez J."/>
            <person name="Rabbinowitsch E."/>
            <person name="Steffen D."/>
            <person name="Sanders M."/>
            <person name="Ma J."/>
            <person name="Kohara Y."/>
            <person name="Sharp S."/>
            <person name="Simmonds M.N."/>
            <person name="Spiegler S."/>
            <person name="Tivey A."/>
            <person name="Sugano S."/>
            <person name="White B."/>
            <person name="Walker D."/>
            <person name="Woodward J.R."/>
            <person name="Winckler T."/>
            <person name="Tanaka Y."/>
            <person name="Shaulsky G."/>
            <person name="Schleicher M."/>
            <person name="Weinstock G.M."/>
            <person name="Rosenthal A."/>
            <person name="Cox E.C."/>
            <person name="Chisholm R.L."/>
            <person name="Gibbs R.A."/>
            <person name="Loomis W.F."/>
            <person name="Platzer M."/>
            <person name="Kay R.R."/>
            <person name="Williams J.G."/>
            <person name="Dear P.H."/>
            <person name="Noegel A.A."/>
            <person name="Barrell B.G."/>
            <person name="Kuspa A."/>
        </authorList>
    </citation>
    <scope>NUCLEOTIDE SEQUENCE [LARGE SCALE GENOMIC DNA]</scope>
    <source>
        <strain>AX4</strain>
    </source>
</reference>